<proteinExistence type="evidence at protein level"/>
<protein>
    <recommendedName>
        <fullName>Cadherin-2</fullName>
    </recommendedName>
    <alternativeName>
        <fullName>CDw325</fullName>
    </alternativeName>
    <alternativeName>
        <fullName>Neural cadherin</fullName>
        <shortName evidence="22">N-cadherin</shortName>
    </alternativeName>
    <cdAntigenName>CD325</cdAntigenName>
</protein>
<name>CADH2_HUMAN</name>
<dbReference type="EMBL" id="X54315">
    <property type="protein sequence ID" value="CAA38213.1"/>
    <property type="molecule type" value="mRNA"/>
</dbReference>
<dbReference type="EMBL" id="S42303">
    <property type="protein sequence ID" value="AAB22854.1"/>
    <property type="molecule type" value="mRNA"/>
</dbReference>
<dbReference type="EMBL" id="AK302831">
    <property type="protein sequence ID" value="BAH13814.1"/>
    <property type="molecule type" value="mRNA"/>
</dbReference>
<dbReference type="EMBL" id="AC006249">
    <property type="status" value="NOT_ANNOTATED_CDS"/>
    <property type="molecule type" value="Genomic_DNA"/>
</dbReference>
<dbReference type="EMBL" id="AC015933">
    <property type="status" value="NOT_ANNOTATED_CDS"/>
    <property type="molecule type" value="Genomic_DNA"/>
</dbReference>
<dbReference type="EMBL" id="AC110015">
    <property type="status" value="NOT_ANNOTATED_CDS"/>
    <property type="molecule type" value="Genomic_DNA"/>
</dbReference>
<dbReference type="EMBL" id="EF444966">
    <property type="protein sequence ID" value="ACA05964.1"/>
    <property type="molecule type" value="Genomic_DNA"/>
</dbReference>
<dbReference type="EMBL" id="CH471088">
    <property type="protein sequence ID" value="EAX01240.1"/>
    <property type="molecule type" value="Genomic_DNA"/>
</dbReference>
<dbReference type="EMBL" id="BC036470">
    <property type="protein sequence ID" value="AAH36470.1"/>
    <property type="molecule type" value="mRNA"/>
</dbReference>
<dbReference type="EMBL" id="M34064">
    <property type="protein sequence ID" value="AAA03236.1"/>
    <property type="molecule type" value="mRNA"/>
</dbReference>
<dbReference type="EMBL" id="X57548">
    <property type="protein sequence ID" value="CAA40773.1"/>
    <property type="molecule type" value="mRNA"/>
</dbReference>
<dbReference type="EMBL" id="Z27420">
    <property type="protein sequence ID" value="CAA81799.1"/>
    <property type="molecule type" value="Genomic_DNA"/>
</dbReference>
<dbReference type="CCDS" id="CCDS11891.1">
    <molecule id="P19022-1"/>
</dbReference>
<dbReference type="CCDS" id="CCDS77172.1">
    <molecule id="P19022-2"/>
</dbReference>
<dbReference type="PIR" id="A38870">
    <property type="entry name" value="IJHUCN"/>
</dbReference>
<dbReference type="RefSeq" id="NP_001295105.1">
    <molecule id="P19022-2"/>
    <property type="nucleotide sequence ID" value="NM_001308176.2"/>
</dbReference>
<dbReference type="RefSeq" id="NP_001783.2">
    <molecule id="P19022-1"/>
    <property type="nucleotide sequence ID" value="NM_001792.4"/>
</dbReference>
<dbReference type="SMR" id="P19022"/>
<dbReference type="BioGRID" id="107435">
    <property type="interactions" value="118"/>
</dbReference>
<dbReference type="CORUM" id="P19022"/>
<dbReference type="DIP" id="DIP-43894N"/>
<dbReference type="FunCoup" id="P19022">
    <property type="interactions" value="488"/>
</dbReference>
<dbReference type="IntAct" id="P19022">
    <property type="interactions" value="49"/>
</dbReference>
<dbReference type="MINT" id="P19022"/>
<dbReference type="STRING" id="9606.ENSP00000269141"/>
<dbReference type="BindingDB" id="P19022"/>
<dbReference type="ChEMBL" id="CHEMBL1697669"/>
<dbReference type="GlyConnect" id="733">
    <property type="glycosylation" value="11 N-Linked glycans (4 sites)"/>
</dbReference>
<dbReference type="GlyCosmos" id="P19022">
    <property type="glycosylation" value="7 sites, 12 glycans"/>
</dbReference>
<dbReference type="GlyGen" id="P19022">
    <property type="glycosylation" value="13 sites, 36 N-linked glycans (6 sites), 1 O-linked glycan (3 sites)"/>
</dbReference>
<dbReference type="iPTMnet" id="P19022"/>
<dbReference type="PhosphoSitePlus" id="P19022"/>
<dbReference type="BioMuta" id="CDH2"/>
<dbReference type="DMDM" id="116241277"/>
<dbReference type="CPTAC" id="CPTAC-5769"/>
<dbReference type="CPTAC" id="CPTAC-5770"/>
<dbReference type="CPTAC" id="non-CPTAC-5371"/>
<dbReference type="CPTAC" id="non-CPTAC-5373"/>
<dbReference type="CPTAC" id="non-CPTAC-5374"/>
<dbReference type="CPTAC" id="non-CPTAC-5543"/>
<dbReference type="CPTAC" id="non-CPTAC-5544"/>
<dbReference type="jPOST" id="P19022"/>
<dbReference type="MassIVE" id="P19022"/>
<dbReference type="PaxDb" id="9606-ENSP00000269141"/>
<dbReference type="PeptideAtlas" id="P19022"/>
<dbReference type="ProteomicsDB" id="2250"/>
<dbReference type="ProteomicsDB" id="53628">
    <molecule id="P19022-1"/>
</dbReference>
<dbReference type="Pumba" id="P19022"/>
<dbReference type="TopDownProteomics" id="P19022-1">
    <molecule id="P19022-1"/>
</dbReference>
<dbReference type="ABCD" id="P19022">
    <property type="antibodies" value="4 sequenced antibodies"/>
</dbReference>
<dbReference type="Antibodypedia" id="4558">
    <property type="antibodies" value="1831 antibodies from 53 providers"/>
</dbReference>
<dbReference type="CPTC" id="P19022">
    <property type="antibodies" value="5 antibodies"/>
</dbReference>
<dbReference type="DNASU" id="1000"/>
<dbReference type="Ensembl" id="ENST00000269141.8">
    <molecule id="P19022-1"/>
    <property type="protein sequence ID" value="ENSP00000269141.3"/>
    <property type="gene ID" value="ENSG00000170558.10"/>
</dbReference>
<dbReference type="Ensembl" id="ENST00000399380.7">
    <molecule id="P19022-2"/>
    <property type="protein sequence ID" value="ENSP00000382312.3"/>
    <property type="gene ID" value="ENSG00000170558.10"/>
</dbReference>
<dbReference type="GeneID" id="1000"/>
<dbReference type="KEGG" id="hsa:1000"/>
<dbReference type="MANE-Select" id="ENST00000269141.8">
    <property type="protein sequence ID" value="ENSP00000269141.3"/>
    <property type="RefSeq nucleotide sequence ID" value="NM_001792.5"/>
    <property type="RefSeq protein sequence ID" value="NP_001783.2"/>
</dbReference>
<dbReference type="UCSC" id="uc002kwg.3">
    <molecule id="P19022-1"/>
    <property type="organism name" value="human"/>
</dbReference>
<dbReference type="AGR" id="HGNC:1759"/>
<dbReference type="CTD" id="1000"/>
<dbReference type="DisGeNET" id="1000"/>
<dbReference type="GeneCards" id="CDH2"/>
<dbReference type="HGNC" id="HGNC:1759">
    <property type="gene designation" value="CDH2"/>
</dbReference>
<dbReference type="HPA" id="ENSG00000170558">
    <property type="expression patterns" value="Tissue enhanced (heart)"/>
</dbReference>
<dbReference type="MalaCards" id="CDH2"/>
<dbReference type="MIM" id="114020">
    <property type="type" value="gene"/>
</dbReference>
<dbReference type="MIM" id="618920">
    <property type="type" value="phenotype"/>
</dbReference>
<dbReference type="MIM" id="618929">
    <property type="type" value="phenotype"/>
</dbReference>
<dbReference type="MIM" id="619957">
    <property type="type" value="phenotype"/>
</dbReference>
<dbReference type="neXtProt" id="NX_P19022"/>
<dbReference type="OpenTargets" id="ENSG00000170558"/>
<dbReference type="Orphanet" id="293910">
    <property type="disease" value="Inherited isolated arrhythmogenic cardiomyopathy, dominant-right variant"/>
</dbReference>
<dbReference type="PharmGKB" id="PA26293"/>
<dbReference type="VEuPathDB" id="HostDB:ENSG00000170558"/>
<dbReference type="eggNOG" id="KOG3594">
    <property type="taxonomic scope" value="Eukaryota"/>
</dbReference>
<dbReference type="GeneTree" id="ENSGT00940000155981"/>
<dbReference type="HOGENOM" id="CLU_005284_2_0_1"/>
<dbReference type="InParanoid" id="P19022"/>
<dbReference type="OMA" id="KEQWQVI"/>
<dbReference type="OrthoDB" id="6079678at2759"/>
<dbReference type="PAN-GO" id="P19022">
    <property type="GO annotations" value="17 GO annotations based on evolutionary models"/>
</dbReference>
<dbReference type="PhylomeDB" id="P19022"/>
<dbReference type="TreeFam" id="TF316817"/>
<dbReference type="PathwayCommons" id="P19022"/>
<dbReference type="Reactome" id="R-HSA-381426">
    <property type="pathway name" value="Regulation of Insulin-like Growth Factor (IGF) transport and uptake by Insulin-like Growth Factor Binding Proteins (IGFBPs)"/>
</dbReference>
<dbReference type="Reactome" id="R-HSA-418990">
    <property type="pathway name" value="Adherens junctions interactions"/>
</dbReference>
<dbReference type="Reactome" id="R-HSA-525793">
    <property type="pathway name" value="Myogenesis"/>
</dbReference>
<dbReference type="Reactome" id="R-HSA-8957275">
    <property type="pathway name" value="Post-translational protein phosphorylation"/>
</dbReference>
<dbReference type="Reactome" id="R-HSA-9926550">
    <property type="pathway name" value="Regulation of MITF-M-dependent genes involved in extracellular matrix, focal adhesion and epithelial-to-mesenchymal transition"/>
</dbReference>
<dbReference type="SignaLink" id="P19022"/>
<dbReference type="SIGNOR" id="P19022"/>
<dbReference type="BioGRID-ORCS" id="1000">
    <property type="hits" value="62 hits in 1154 CRISPR screens"/>
</dbReference>
<dbReference type="CD-CODE" id="FB4E32DD">
    <property type="entry name" value="Presynaptic clusters and postsynaptic densities"/>
</dbReference>
<dbReference type="ChiTaRS" id="CDH2">
    <property type="organism name" value="human"/>
</dbReference>
<dbReference type="GeneWiki" id="CDH2"/>
<dbReference type="GenomeRNAi" id="1000"/>
<dbReference type="Pharos" id="P19022">
    <property type="development level" value="Tbio"/>
</dbReference>
<dbReference type="PRO" id="PR:P19022"/>
<dbReference type="Proteomes" id="UP000005640">
    <property type="component" value="Chromosome 18"/>
</dbReference>
<dbReference type="RNAct" id="P19022">
    <property type="molecule type" value="protein"/>
</dbReference>
<dbReference type="Bgee" id="ENSG00000170558">
    <property type="expression patterns" value="Expressed in heart right ventricle and 170 other cell types or tissues"/>
</dbReference>
<dbReference type="ExpressionAtlas" id="P19022">
    <property type="expression patterns" value="baseline and differential"/>
</dbReference>
<dbReference type="GO" id="GO:0005912">
    <property type="term" value="C:adherens junction"/>
    <property type="evidence" value="ECO:0000314"/>
    <property type="project" value="UniProtKB"/>
</dbReference>
<dbReference type="GO" id="GO:0045177">
    <property type="term" value="C:apical part of cell"/>
    <property type="evidence" value="ECO:0000318"/>
    <property type="project" value="GO_Central"/>
</dbReference>
<dbReference type="GO" id="GO:0016324">
    <property type="term" value="C:apical plasma membrane"/>
    <property type="evidence" value="ECO:0007669"/>
    <property type="project" value="Ensembl"/>
</dbReference>
<dbReference type="GO" id="GO:0016327">
    <property type="term" value="C:apicolateral plasma membrane"/>
    <property type="evidence" value="ECO:0007669"/>
    <property type="project" value="Ensembl"/>
</dbReference>
<dbReference type="GO" id="GO:0016323">
    <property type="term" value="C:basolateral plasma membrane"/>
    <property type="evidence" value="ECO:0007669"/>
    <property type="project" value="Ensembl"/>
</dbReference>
<dbReference type="GO" id="GO:0016342">
    <property type="term" value="C:catenin complex"/>
    <property type="evidence" value="ECO:0000314"/>
    <property type="project" value="BHF-UCL"/>
</dbReference>
<dbReference type="GO" id="GO:0030054">
    <property type="term" value="C:cell junction"/>
    <property type="evidence" value="ECO:0000314"/>
    <property type="project" value="UniProtKB"/>
</dbReference>
<dbReference type="GO" id="GO:0009986">
    <property type="term" value="C:cell surface"/>
    <property type="evidence" value="ECO:0000250"/>
    <property type="project" value="UniProtKB"/>
</dbReference>
<dbReference type="GO" id="GO:0005911">
    <property type="term" value="C:cell-cell junction"/>
    <property type="evidence" value="ECO:0000314"/>
    <property type="project" value="BHF-UCL"/>
</dbReference>
<dbReference type="GO" id="GO:0062023">
    <property type="term" value="C:collagen-containing extracellular matrix"/>
    <property type="evidence" value="ECO:0007005"/>
    <property type="project" value="BHF-UCL"/>
</dbReference>
<dbReference type="GO" id="GO:0005737">
    <property type="term" value="C:cytoplasm"/>
    <property type="evidence" value="ECO:0000314"/>
    <property type="project" value="UniProtKB"/>
</dbReference>
<dbReference type="GO" id="GO:0030057">
    <property type="term" value="C:desmosome"/>
    <property type="evidence" value="ECO:0000250"/>
    <property type="project" value="UniProtKB"/>
</dbReference>
<dbReference type="GO" id="GO:0005788">
    <property type="term" value="C:endoplasmic reticulum lumen"/>
    <property type="evidence" value="ECO:0000304"/>
    <property type="project" value="Reactome"/>
</dbReference>
<dbReference type="GO" id="GO:0005916">
    <property type="term" value="C:fascia adherens"/>
    <property type="evidence" value="ECO:0007669"/>
    <property type="project" value="Ensembl"/>
</dbReference>
<dbReference type="GO" id="GO:0005925">
    <property type="term" value="C:focal adhesion"/>
    <property type="evidence" value="ECO:0007005"/>
    <property type="project" value="UniProtKB"/>
</dbReference>
<dbReference type="GO" id="GO:0014704">
    <property type="term" value="C:intercalated disc"/>
    <property type="evidence" value="ECO:0000250"/>
    <property type="project" value="BHF-UCL"/>
</dbReference>
<dbReference type="GO" id="GO:0030027">
    <property type="term" value="C:lamellipodium"/>
    <property type="evidence" value="ECO:0000314"/>
    <property type="project" value="UniProtKB"/>
</dbReference>
<dbReference type="GO" id="GO:0043005">
    <property type="term" value="C:neuron projection"/>
    <property type="evidence" value="ECO:0000318"/>
    <property type="project" value="GO_Central"/>
</dbReference>
<dbReference type="GO" id="GO:0005886">
    <property type="term" value="C:plasma membrane"/>
    <property type="evidence" value="ECO:0000314"/>
    <property type="project" value="UniProtKB"/>
</dbReference>
<dbReference type="GO" id="GO:0044853">
    <property type="term" value="C:plasma membrane raft"/>
    <property type="evidence" value="ECO:0007669"/>
    <property type="project" value="Ensembl"/>
</dbReference>
<dbReference type="GO" id="GO:0098793">
    <property type="term" value="C:presynapse"/>
    <property type="evidence" value="ECO:0007669"/>
    <property type="project" value="GOC"/>
</dbReference>
<dbReference type="GO" id="GO:0042383">
    <property type="term" value="C:sarcolemma"/>
    <property type="evidence" value="ECO:0007669"/>
    <property type="project" value="UniProtKB-SubCell"/>
</dbReference>
<dbReference type="GO" id="GO:0045294">
    <property type="term" value="F:alpha-catenin binding"/>
    <property type="evidence" value="ECO:0000353"/>
    <property type="project" value="BHF-UCL"/>
</dbReference>
<dbReference type="GO" id="GO:0008013">
    <property type="term" value="F:beta-catenin binding"/>
    <property type="evidence" value="ECO:0000353"/>
    <property type="project" value="UniProtKB"/>
</dbReference>
<dbReference type="GO" id="GO:0045296">
    <property type="term" value="F:cadherin binding"/>
    <property type="evidence" value="ECO:0000318"/>
    <property type="project" value="GO_Central"/>
</dbReference>
<dbReference type="GO" id="GO:0005509">
    <property type="term" value="F:calcium ion binding"/>
    <property type="evidence" value="ECO:0000250"/>
    <property type="project" value="UniProtKB"/>
</dbReference>
<dbReference type="GO" id="GO:0045295">
    <property type="term" value="F:gamma-catenin binding"/>
    <property type="evidence" value="ECO:0000353"/>
    <property type="project" value="BHF-UCL"/>
</dbReference>
<dbReference type="GO" id="GO:0042802">
    <property type="term" value="F:identical protein binding"/>
    <property type="evidence" value="ECO:0007669"/>
    <property type="project" value="Ensembl"/>
</dbReference>
<dbReference type="GO" id="GO:0019901">
    <property type="term" value="F:protein kinase binding"/>
    <property type="evidence" value="ECO:0007669"/>
    <property type="project" value="Ensembl"/>
</dbReference>
<dbReference type="GO" id="GO:0019903">
    <property type="term" value="F:protein phosphatase binding"/>
    <property type="evidence" value="ECO:0007669"/>
    <property type="project" value="Ensembl"/>
</dbReference>
<dbReference type="GO" id="GO:0003723">
    <property type="term" value="F:RNA binding"/>
    <property type="evidence" value="ECO:0007669"/>
    <property type="project" value="Ensembl"/>
</dbReference>
<dbReference type="GO" id="GO:0034332">
    <property type="term" value="P:adherens junction organization"/>
    <property type="evidence" value="ECO:0000318"/>
    <property type="project" value="GO_Central"/>
</dbReference>
<dbReference type="GO" id="GO:0048514">
    <property type="term" value="P:blood vessel morphogenesis"/>
    <property type="evidence" value="ECO:0007669"/>
    <property type="project" value="Ensembl"/>
</dbReference>
<dbReference type="GO" id="GO:0048854">
    <property type="term" value="P:brain morphogenesis"/>
    <property type="evidence" value="ECO:0007669"/>
    <property type="project" value="Ensembl"/>
</dbReference>
<dbReference type="GO" id="GO:0016339">
    <property type="term" value="P:calcium-dependent cell-cell adhesion via plasma membrane cell adhesion molecules"/>
    <property type="evidence" value="ECO:0000318"/>
    <property type="project" value="GO_Central"/>
</dbReference>
<dbReference type="GO" id="GO:0007155">
    <property type="term" value="P:cell adhesion"/>
    <property type="evidence" value="ECO:0000304"/>
    <property type="project" value="ProtInc"/>
</dbReference>
<dbReference type="GO" id="GO:0016477">
    <property type="term" value="P:cell migration"/>
    <property type="evidence" value="ECO:0000318"/>
    <property type="project" value="GO_Central"/>
</dbReference>
<dbReference type="GO" id="GO:0000902">
    <property type="term" value="P:cell morphogenesis"/>
    <property type="evidence" value="ECO:0000318"/>
    <property type="project" value="GO_Central"/>
</dbReference>
<dbReference type="GO" id="GO:0098609">
    <property type="term" value="P:cell-cell adhesion"/>
    <property type="evidence" value="ECO:0000315"/>
    <property type="project" value="UniProtKB"/>
</dbReference>
<dbReference type="GO" id="GO:0044331">
    <property type="term" value="P:cell-cell adhesion mediated by cadherin"/>
    <property type="evidence" value="ECO:0000250"/>
    <property type="project" value="UniProtKB"/>
</dbReference>
<dbReference type="GO" id="GO:0007043">
    <property type="term" value="P:cell-cell junction assembly"/>
    <property type="evidence" value="ECO:0000250"/>
    <property type="project" value="UniProtKB"/>
</dbReference>
<dbReference type="GO" id="GO:0021987">
    <property type="term" value="P:cerebral cortex development"/>
    <property type="evidence" value="ECO:0007669"/>
    <property type="project" value="Ensembl"/>
</dbReference>
<dbReference type="GO" id="GO:0035995">
    <property type="term" value="P:detection of muscle stretch"/>
    <property type="evidence" value="ECO:0000304"/>
    <property type="project" value="BHF-UCL"/>
</dbReference>
<dbReference type="GO" id="GO:0010001">
    <property type="term" value="P:glial cell differentiation"/>
    <property type="evidence" value="ECO:0000250"/>
    <property type="project" value="UniProtKB"/>
</dbReference>
<dbReference type="GO" id="GO:0007157">
    <property type="term" value="P:heterophilic cell-cell adhesion via plasma membrane cell adhesion molecules"/>
    <property type="evidence" value="ECO:0007669"/>
    <property type="project" value="Ensembl"/>
</dbReference>
<dbReference type="GO" id="GO:0048872">
    <property type="term" value="P:homeostasis of number of cells"/>
    <property type="evidence" value="ECO:0007669"/>
    <property type="project" value="Ensembl"/>
</dbReference>
<dbReference type="GO" id="GO:0007156">
    <property type="term" value="P:homophilic cell adhesion via plasma membrane adhesion molecules"/>
    <property type="evidence" value="ECO:0007669"/>
    <property type="project" value="Ensembl"/>
</dbReference>
<dbReference type="GO" id="GO:0090497">
    <property type="term" value="P:mesenchymal cell migration"/>
    <property type="evidence" value="ECO:0007669"/>
    <property type="project" value="Ensembl"/>
</dbReference>
<dbReference type="GO" id="GO:0090090">
    <property type="term" value="P:negative regulation of canonical Wnt signaling pathway"/>
    <property type="evidence" value="ECO:0007669"/>
    <property type="project" value="Ensembl"/>
</dbReference>
<dbReference type="GO" id="GO:0014032">
    <property type="term" value="P:neural crest cell development"/>
    <property type="evidence" value="ECO:0000250"/>
    <property type="project" value="UniProtKB"/>
</dbReference>
<dbReference type="GO" id="GO:0060563">
    <property type="term" value="P:neuroepithelial cell differentiation"/>
    <property type="evidence" value="ECO:0007669"/>
    <property type="project" value="Ensembl"/>
</dbReference>
<dbReference type="GO" id="GO:0097118">
    <property type="term" value="P:neuroligin clustering involved in postsynaptic membrane assembly"/>
    <property type="evidence" value="ECO:0007669"/>
    <property type="project" value="Ensembl"/>
</dbReference>
<dbReference type="GO" id="GO:0097150">
    <property type="term" value="P:neuronal stem cell population maintenance"/>
    <property type="evidence" value="ECO:0000250"/>
    <property type="project" value="UniProtKB"/>
</dbReference>
<dbReference type="GO" id="GO:0043410">
    <property type="term" value="P:positive regulation of MAPK cascade"/>
    <property type="evidence" value="ECO:0007669"/>
    <property type="project" value="Ensembl"/>
</dbReference>
<dbReference type="GO" id="GO:2000809">
    <property type="term" value="P:positive regulation of synaptic vesicle clustering"/>
    <property type="evidence" value="ECO:0007669"/>
    <property type="project" value="Ensembl"/>
</dbReference>
<dbReference type="GO" id="GO:0072659">
    <property type="term" value="P:protein localization to plasma membrane"/>
    <property type="evidence" value="ECO:0007669"/>
    <property type="project" value="Ensembl"/>
</dbReference>
<dbReference type="GO" id="GO:0060019">
    <property type="term" value="P:radial glial cell differentiation"/>
    <property type="evidence" value="ECO:0007669"/>
    <property type="project" value="Ensembl"/>
</dbReference>
<dbReference type="GO" id="GO:0070445">
    <property type="term" value="P:regulation of oligodendrocyte progenitor proliferation"/>
    <property type="evidence" value="ECO:0007669"/>
    <property type="project" value="Ensembl"/>
</dbReference>
<dbReference type="GO" id="GO:1902897">
    <property type="term" value="P:regulation of postsynaptic density protein 95 clustering"/>
    <property type="evidence" value="ECO:0007669"/>
    <property type="project" value="Ensembl"/>
</dbReference>
<dbReference type="GO" id="GO:0051146">
    <property type="term" value="P:striated muscle cell differentiation"/>
    <property type="evidence" value="ECO:0007669"/>
    <property type="project" value="Ensembl"/>
</dbReference>
<dbReference type="GO" id="GO:0007416">
    <property type="term" value="P:synapse assembly"/>
    <property type="evidence" value="ECO:0000318"/>
    <property type="project" value="GO_Central"/>
</dbReference>
<dbReference type="GO" id="GO:0097091">
    <property type="term" value="P:synaptic vesicle clustering"/>
    <property type="evidence" value="ECO:0000250"/>
    <property type="project" value="UniProtKB"/>
</dbReference>
<dbReference type="GO" id="GO:0003323">
    <property type="term" value="P:type B pancreatic cell development"/>
    <property type="evidence" value="ECO:0000250"/>
    <property type="project" value="UniProtKB"/>
</dbReference>
<dbReference type="CDD" id="cd11304">
    <property type="entry name" value="Cadherin_repeat"/>
    <property type="match status" value="3"/>
</dbReference>
<dbReference type="FunFam" id="2.60.40.60:FF:000011">
    <property type="entry name" value="Cadherin 1"/>
    <property type="match status" value="1"/>
</dbReference>
<dbReference type="FunFam" id="2.60.40.60:FF:000019">
    <property type="entry name" value="Cadherin 2"/>
    <property type="match status" value="1"/>
</dbReference>
<dbReference type="FunFam" id="2.60.40.60:FF:000022">
    <property type="entry name" value="Cadherin 2"/>
    <property type="match status" value="1"/>
</dbReference>
<dbReference type="FunFam" id="2.60.40.60:FF:000027">
    <property type="entry name" value="Cadherin 2"/>
    <property type="match status" value="1"/>
</dbReference>
<dbReference type="FunFam" id="2.60.40.60:FF:000045">
    <property type="entry name" value="Cadherin 2"/>
    <property type="match status" value="1"/>
</dbReference>
<dbReference type="FunFam" id="4.10.900.10:FF:000001">
    <property type="entry name" value="Cadherin 2"/>
    <property type="match status" value="1"/>
</dbReference>
<dbReference type="FunFam" id="2.60.40.60:FF:000139">
    <property type="entry name" value="Cadherin-2 preproprotein"/>
    <property type="match status" value="1"/>
</dbReference>
<dbReference type="Gene3D" id="2.60.40.60">
    <property type="entry name" value="Cadherins"/>
    <property type="match status" value="6"/>
</dbReference>
<dbReference type="Gene3D" id="4.10.900.10">
    <property type="entry name" value="TCF3-CBD (Catenin binding domain)"/>
    <property type="match status" value="1"/>
</dbReference>
<dbReference type="InterPro" id="IPR039808">
    <property type="entry name" value="Cadherin"/>
</dbReference>
<dbReference type="InterPro" id="IPR002126">
    <property type="entry name" value="Cadherin-like_dom"/>
</dbReference>
<dbReference type="InterPro" id="IPR015919">
    <property type="entry name" value="Cadherin-like_sf"/>
</dbReference>
<dbReference type="InterPro" id="IPR020894">
    <property type="entry name" value="Cadherin_CS"/>
</dbReference>
<dbReference type="InterPro" id="IPR014868">
    <property type="entry name" value="Cadherin_pro_dom"/>
</dbReference>
<dbReference type="InterPro" id="IPR000233">
    <property type="entry name" value="Cadherin_Y-type_LIR"/>
</dbReference>
<dbReference type="InterPro" id="IPR027397">
    <property type="entry name" value="Catenin-bd_sf"/>
</dbReference>
<dbReference type="PANTHER" id="PTHR24027:SF79">
    <property type="entry name" value="CADHERIN-2"/>
    <property type="match status" value="1"/>
</dbReference>
<dbReference type="PANTHER" id="PTHR24027">
    <property type="entry name" value="CADHERIN-23"/>
    <property type="match status" value="1"/>
</dbReference>
<dbReference type="Pfam" id="PF01049">
    <property type="entry name" value="CADH_Y-type_LIR"/>
    <property type="match status" value="1"/>
</dbReference>
<dbReference type="Pfam" id="PF00028">
    <property type="entry name" value="Cadherin"/>
    <property type="match status" value="5"/>
</dbReference>
<dbReference type="Pfam" id="PF08758">
    <property type="entry name" value="Cadherin_pro"/>
    <property type="match status" value="1"/>
</dbReference>
<dbReference type="PRINTS" id="PR00205">
    <property type="entry name" value="CADHERIN"/>
</dbReference>
<dbReference type="PRINTS" id="PR01820">
    <property type="entry name" value="DESMOCOLLIN"/>
</dbReference>
<dbReference type="SMART" id="SM00112">
    <property type="entry name" value="CA"/>
    <property type="match status" value="5"/>
</dbReference>
<dbReference type="SMART" id="SM01055">
    <property type="entry name" value="Cadherin_pro"/>
    <property type="match status" value="1"/>
</dbReference>
<dbReference type="SUPFAM" id="SSF49313">
    <property type="entry name" value="Cadherin-like"/>
    <property type="match status" value="6"/>
</dbReference>
<dbReference type="PROSITE" id="PS00232">
    <property type="entry name" value="CADHERIN_1"/>
    <property type="match status" value="3"/>
</dbReference>
<dbReference type="PROSITE" id="PS50268">
    <property type="entry name" value="CADHERIN_2"/>
    <property type="match status" value="5"/>
</dbReference>
<gene>
    <name type="primary">CDH2</name>
    <name type="synonym">CDHN</name>
    <name type="synonym">NCAD</name>
</gene>
<comment type="function">
    <text evidence="1 2 17">Calcium-dependent cell adhesion protein; preferentially mediates homotypic cell-cell adhesion by dimerization with a CDH2 chain from another cell. Cadherins may thus contribute to the sorting of heterogeneous cell types. Acts as a regulator of neural stem cells quiescence by mediating anchorage of neural stem cells to ependymocytes in the adult subependymal zone: upon cleavage by MMP24, CDH2-mediated anchorage is affected, leading to modulate neural stem cell quiescence. Plays a role in cell-to-cell junction formation between pancreatic beta cells and neural crest stem (NCS) cells, promoting the formation of processes by NCS cells (By similarity). Required for proper neurite branching. Required for pre- and postsynaptic organization (By similarity). CDH2 may be involved in neuronal recognition mechanism. In hippocampal neurons, may regulate dendritic spine density.</text>
</comment>
<comment type="subunit">
    <text evidence="2 3 8 19">Homodimer (via extracellular region). Can also form heterodimers with other cadherins (via extracellular region). Dimerization occurs in trans, i.e. with a cadherin chain from another cell (By similarity). Interacts with CDCP1 (PubMed:16007225). Interacts with PCDH8; this complex may also include TAOK2 (By similarity). The interaction with PCDH8 may lead to internalization through TAOK2/p38 MAPK pathway (By similarity). Identified in a complex containing FGFR4, NCAM1, CDH2, PLCG1, FRS2, SRC, SHC1, GAP43 and CTTN. May interact with OBSCN (via protein kinase domain 2) (By similarity). Interacts with FBXO45 (PubMed:32341084).</text>
</comment>
<comment type="interaction">
    <interactant intactId="EBI-2256711">
        <id>P19022</id>
    </interactant>
    <interactant intactId="EBI-491549">
        <id>P35222</id>
        <label>CTNNB1</label>
    </interactant>
    <organismsDiffer>false</organismsDiffer>
    <experiments>12</experiments>
</comment>
<comment type="interaction">
    <interactant intactId="EBI-2256711">
        <id>P19022</id>
    </interactant>
    <interactant intactId="EBI-701927">
        <id>O60716</id>
        <label>CTNND1</label>
    </interactant>
    <organismsDiffer>false</organismsDiffer>
    <experiments>2</experiments>
</comment>
<comment type="interaction">
    <interactant intactId="EBI-2256711">
        <id>P19022</id>
    </interactant>
    <interactant intactId="EBI-702484">
        <id>P14923</id>
        <label>JUP</label>
    </interactant>
    <organismsDiffer>false</organismsDiffer>
    <experiments>2</experiments>
</comment>
<comment type="subcellular location">
    <subcellularLocation>
        <location evidence="12">Cell membrane</location>
        <topology evidence="4">Single-pass type I membrane protein</topology>
    </subcellularLocation>
    <subcellularLocation>
        <location evidence="2">Cell membrane</location>
        <location evidence="2">Sarcolemma</location>
    </subcellularLocation>
    <subcellularLocation>
        <location evidence="14">Cell junction</location>
    </subcellularLocation>
    <subcellularLocation>
        <location evidence="2">Cell surface</location>
    </subcellularLocation>
    <subcellularLocation>
        <location evidence="2">Cell junction</location>
        <location evidence="2">Desmosome</location>
    </subcellularLocation>
    <subcellularLocation>
        <location evidence="2">Cell junction</location>
        <location evidence="2">Adherens junction</location>
    </subcellularLocation>
    <text evidence="2">Colocalizes with TMEM65 at the intercalated disk in cardiomyocytes. Colocalizes with OBSCN at the intercalated disk and at sarcolemma in cardiomyocytes.</text>
</comment>
<comment type="alternative products">
    <event type="alternative splicing"/>
    <isoform>
        <id>P19022-1</id>
        <name>1</name>
        <sequence type="displayed"/>
    </isoform>
    <isoform>
        <id>P19022-2</id>
        <name>2</name>
        <sequence type="described" ref="VSP_056448"/>
    </isoform>
</comment>
<comment type="domain">
    <text evidence="2">Three calcium ions are usually bound at the interface of each cadherin domain and rigidify the connections, imparting a strong curvature to the full-length ectodomain. Calcium-binding sites are occupied sequentially in the order of site 3, then site 2 and site 1.</text>
</comment>
<comment type="PTM">
    <text evidence="2">Cleaved by MMP24. Ectodomain cleavage leads to the generation of a soluble 90 kDa N-terminal soluble fragment and a 45 kDa membrane-bound C-terminal fragment 1 (CTF1), which is further cleaved by gamma-secretase into a 35 kDa (By similarity). Cleavage in neural stem cells by MMP24 affects CDH2-mediated anchorage of neural stem cells to ependymocytes in the adult subependymal zone, leading to modulate neural stem cell quiescence (By similarity).</text>
</comment>
<comment type="PTM">
    <text evidence="2">May be phosphorylated by OBSCN.</text>
</comment>
<comment type="disease" evidence="15 16">
    <disease id="DI-05863">
        <name>Arrhythmogenic right ventricular dysplasia, familial, 14</name>
        <acronym>ARVD14</acronym>
        <description>A congenital heart disease characterized by infiltration of adipose and fibrous tissue into the right ventricle and loss of myocardial cells, resulting in ventricular and supraventricular arrhythmias.</description>
        <dbReference type="MIM" id="618920"/>
    </disease>
    <text>The disease may be caused by variants affecting the gene represented in this entry.</text>
</comment>
<comment type="disease" evidence="17 18">
    <disease id="DI-05864">
        <name>Agenesis of corpus callosum, cardiac, ocular, and genital syndrome</name>
        <acronym>ACOGS</acronym>
        <description>An autosomal dominant, syndromic neurodevelopmental disorder characterized by global developmental delay and/or intellectual disability, corpus callosum agenesis or hypoplasia, mirror movements, dysmorphic features, and ocular, cardiac, and genital anomalies.</description>
        <dbReference type="MIM" id="618929"/>
    </disease>
    <text>The disease is caused by variants affecting the gene represented in this entry.</text>
</comment>
<comment type="disease" evidence="20">
    <disease id="DI-06470">
        <name>Attention deficit-hyperactivity disorder 8</name>
        <acronym>ADHD8</acronym>
        <description>A form of attention deficit-hyperactivity disorder, a neurobehavioral developmental condition primarily characterized by the coexistence of attentional problems and hyperactivity, with each feature occurring infrequently alone. ADHD8 is an autosomal recessive form with onset in early childhood, usually by age 3 years. ADHD8 patients may manifest mild developmental delay with autism.</description>
        <dbReference type="MIM" id="619957"/>
    </disease>
    <text>The disease is caused by variants affecting the gene represented in this entry.</text>
</comment>
<reference key="1">
    <citation type="journal article" date="1990" name="Nucleic Acids Res.">
        <title>Human N-cadherin: nucleotide and deduced amino acid sequence.</title>
        <authorList>
            <person name="Reid R.A."/>
            <person name="Hemperly J.J."/>
        </authorList>
    </citation>
    <scope>NUCLEOTIDE SEQUENCE [MRNA] (ISOFORM 1)</scope>
    <scope>VARIANT THR-196</scope>
</reference>
<reference key="2">
    <citation type="submission" date="1990-11" db="EMBL/GenBank/DDBJ databases">
        <authorList>
            <person name="Reid R.A."/>
        </authorList>
    </citation>
    <scope>SEQUENCE REVISION TO 341; 699 AND 705</scope>
</reference>
<reference key="3">
    <citation type="journal article" date="1992" name="J. Cell Sci.">
        <title>Extrajunctional distribution of N-cadherin in cultured human endothelial cells.</title>
        <authorList>
            <person name="Salomon D."/>
            <person name="Ayalon O."/>
            <person name="Patel-King R."/>
            <person name="Hynes R.O."/>
            <person name="Geiger B."/>
        </authorList>
    </citation>
    <scope>NUCLEOTIDE SEQUENCE [MRNA] (ISOFORM 1)</scope>
</reference>
<reference key="4">
    <citation type="journal article" date="2004" name="Nat. Genet.">
        <title>Complete sequencing and characterization of 21,243 full-length human cDNAs.</title>
        <authorList>
            <person name="Ota T."/>
            <person name="Suzuki Y."/>
            <person name="Nishikawa T."/>
            <person name="Otsuki T."/>
            <person name="Sugiyama T."/>
            <person name="Irie R."/>
            <person name="Wakamatsu A."/>
            <person name="Hayashi K."/>
            <person name="Sato H."/>
            <person name="Nagai K."/>
            <person name="Kimura K."/>
            <person name="Makita H."/>
            <person name="Sekine M."/>
            <person name="Obayashi M."/>
            <person name="Nishi T."/>
            <person name="Shibahara T."/>
            <person name="Tanaka T."/>
            <person name="Ishii S."/>
            <person name="Yamamoto J."/>
            <person name="Saito K."/>
            <person name="Kawai Y."/>
            <person name="Isono Y."/>
            <person name="Nakamura Y."/>
            <person name="Nagahari K."/>
            <person name="Murakami K."/>
            <person name="Yasuda T."/>
            <person name="Iwayanagi T."/>
            <person name="Wagatsuma M."/>
            <person name="Shiratori A."/>
            <person name="Sudo H."/>
            <person name="Hosoiri T."/>
            <person name="Kaku Y."/>
            <person name="Kodaira H."/>
            <person name="Kondo H."/>
            <person name="Sugawara M."/>
            <person name="Takahashi M."/>
            <person name="Kanda K."/>
            <person name="Yokoi T."/>
            <person name="Furuya T."/>
            <person name="Kikkawa E."/>
            <person name="Omura Y."/>
            <person name="Abe K."/>
            <person name="Kamihara K."/>
            <person name="Katsuta N."/>
            <person name="Sato K."/>
            <person name="Tanikawa M."/>
            <person name="Yamazaki M."/>
            <person name="Ninomiya K."/>
            <person name="Ishibashi T."/>
            <person name="Yamashita H."/>
            <person name="Murakawa K."/>
            <person name="Fujimori K."/>
            <person name="Tanai H."/>
            <person name="Kimata M."/>
            <person name="Watanabe M."/>
            <person name="Hiraoka S."/>
            <person name="Chiba Y."/>
            <person name="Ishida S."/>
            <person name="Ono Y."/>
            <person name="Takiguchi S."/>
            <person name="Watanabe S."/>
            <person name="Yosida M."/>
            <person name="Hotuta T."/>
            <person name="Kusano J."/>
            <person name="Kanehori K."/>
            <person name="Takahashi-Fujii A."/>
            <person name="Hara H."/>
            <person name="Tanase T.-O."/>
            <person name="Nomura Y."/>
            <person name="Togiya S."/>
            <person name="Komai F."/>
            <person name="Hara R."/>
            <person name="Takeuchi K."/>
            <person name="Arita M."/>
            <person name="Imose N."/>
            <person name="Musashino K."/>
            <person name="Yuuki H."/>
            <person name="Oshima A."/>
            <person name="Sasaki N."/>
            <person name="Aotsuka S."/>
            <person name="Yoshikawa Y."/>
            <person name="Matsunawa H."/>
            <person name="Ichihara T."/>
            <person name="Shiohata N."/>
            <person name="Sano S."/>
            <person name="Moriya S."/>
            <person name="Momiyama H."/>
            <person name="Satoh N."/>
            <person name="Takami S."/>
            <person name="Terashima Y."/>
            <person name="Suzuki O."/>
            <person name="Nakagawa S."/>
            <person name="Senoh A."/>
            <person name="Mizoguchi H."/>
            <person name="Goto Y."/>
            <person name="Shimizu F."/>
            <person name="Wakebe H."/>
            <person name="Hishigaki H."/>
            <person name="Watanabe T."/>
            <person name="Sugiyama A."/>
            <person name="Takemoto M."/>
            <person name="Kawakami B."/>
            <person name="Yamazaki M."/>
            <person name="Watanabe K."/>
            <person name="Kumagai A."/>
            <person name="Itakura S."/>
            <person name="Fukuzumi Y."/>
            <person name="Fujimori Y."/>
            <person name="Komiyama M."/>
            <person name="Tashiro H."/>
            <person name="Tanigami A."/>
            <person name="Fujiwara T."/>
            <person name="Ono T."/>
            <person name="Yamada K."/>
            <person name="Fujii Y."/>
            <person name="Ozaki K."/>
            <person name="Hirao M."/>
            <person name="Ohmori Y."/>
            <person name="Kawabata A."/>
            <person name="Hikiji T."/>
            <person name="Kobatake N."/>
            <person name="Inagaki H."/>
            <person name="Ikema Y."/>
            <person name="Okamoto S."/>
            <person name="Okitani R."/>
            <person name="Kawakami T."/>
            <person name="Noguchi S."/>
            <person name="Itoh T."/>
            <person name="Shigeta K."/>
            <person name="Senba T."/>
            <person name="Matsumura K."/>
            <person name="Nakajima Y."/>
            <person name="Mizuno T."/>
            <person name="Morinaga M."/>
            <person name="Sasaki M."/>
            <person name="Togashi T."/>
            <person name="Oyama M."/>
            <person name="Hata H."/>
            <person name="Watanabe M."/>
            <person name="Komatsu T."/>
            <person name="Mizushima-Sugano J."/>
            <person name="Satoh T."/>
            <person name="Shirai Y."/>
            <person name="Takahashi Y."/>
            <person name="Nakagawa K."/>
            <person name="Okumura K."/>
            <person name="Nagase T."/>
            <person name="Nomura N."/>
            <person name="Kikuchi H."/>
            <person name="Masuho Y."/>
            <person name="Yamashita R."/>
            <person name="Nakai K."/>
            <person name="Yada T."/>
            <person name="Nakamura Y."/>
            <person name="Ohara O."/>
            <person name="Isogai T."/>
            <person name="Sugano S."/>
        </authorList>
    </citation>
    <scope>NUCLEOTIDE SEQUENCE [LARGE SCALE MRNA] (ISOFORM 2)</scope>
    <source>
        <tissue>Testis</tissue>
    </source>
</reference>
<reference key="5">
    <citation type="submission" date="2007-02" db="EMBL/GenBank/DDBJ databases">
        <authorList>
            <consortium name="NHLBI resequencing and genotyping service (RS&amp;G)"/>
        </authorList>
    </citation>
    <scope>NUCLEOTIDE SEQUENCE [GENOMIC DNA]</scope>
</reference>
<reference key="6">
    <citation type="journal article" date="2005" name="Nature">
        <title>DNA sequence and analysis of human chromosome 18.</title>
        <authorList>
            <person name="Nusbaum C."/>
            <person name="Zody M.C."/>
            <person name="Borowsky M.L."/>
            <person name="Kamal M."/>
            <person name="Kodira C.D."/>
            <person name="Taylor T.D."/>
            <person name="Whittaker C.A."/>
            <person name="Chang J.L."/>
            <person name="Cuomo C.A."/>
            <person name="Dewar K."/>
            <person name="FitzGerald M.G."/>
            <person name="Yang X."/>
            <person name="Abouelleil A."/>
            <person name="Allen N.R."/>
            <person name="Anderson S."/>
            <person name="Bloom T."/>
            <person name="Bugalter B."/>
            <person name="Butler J."/>
            <person name="Cook A."/>
            <person name="DeCaprio D."/>
            <person name="Engels R."/>
            <person name="Garber M."/>
            <person name="Gnirke A."/>
            <person name="Hafez N."/>
            <person name="Hall J.L."/>
            <person name="Norman C.H."/>
            <person name="Itoh T."/>
            <person name="Jaffe D.B."/>
            <person name="Kuroki Y."/>
            <person name="Lehoczky J."/>
            <person name="Lui A."/>
            <person name="Macdonald P."/>
            <person name="Mauceli E."/>
            <person name="Mikkelsen T.S."/>
            <person name="Naylor J.W."/>
            <person name="Nicol R."/>
            <person name="Nguyen C."/>
            <person name="Noguchi H."/>
            <person name="O'Leary S.B."/>
            <person name="Piqani B."/>
            <person name="Smith C.L."/>
            <person name="Talamas J.A."/>
            <person name="Topham K."/>
            <person name="Totoki Y."/>
            <person name="Toyoda A."/>
            <person name="Wain H.M."/>
            <person name="Young S.K."/>
            <person name="Zeng Q."/>
            <person name="Zimmer A.R."/>
            <person name="Fujiyama A."/>
            <person name="Hattori M."/>
            <person name="Birren B.W."/>
            <person name="Sakaki Y."/>
            <person name="Lander E.S."/>
        </authorList>
    </citation>
    <scope>NUCLEOTIDE SEQUENCE [LARGE SCALE GENOMIC DNA]</scope>
</reference>
<reference key="7">
    <citation type="submission" date="2005-07" db="EMBL/GenBank/DDBJ databases">
        <authorList>
            <person name="Mural R.J."/>
            <person name="Istrail S."/>
            <person name="Sutton G.G."/>
            <person name="Florea L."/>
            <person name="Halpern A.L."/>
            <person name="Mobarry C.M."/>
            <person name="Lippert R."/>
            <person name="Walenz B."/>
            <person name="Shatkay H."/>
            <person name="Dew I."/>
            <person name="Miller J.R."/>
            <person name="Flanigan M.J."/>
            <person name="Edwards N.J."/>
            <person name="Bolanos R."/>
            <person name="Fasulo D."/>
            <person name="Halldorsson B.V."/>
            <person name="Hannenhalli S."/>
            <person name="Turner R."/>
            <person name="Yooseph S."/>
            <person name="Lu F."/>
            <person name="Nusskern D.R."/>
            <person name="Shue B.C."/>
            <person name="Zheng X.H."/>
            <person name="Zhong F."/>
            <person name="Delcher A.L."/>
            <person name="Huson D.H."/>
            <person name="Kravitz S.A."/>
            <person name="Mouchard L."/>
            <person name="Reinert K."/>
            <person name="Remington K.A."/>
            <person name="Clark A.G."/>
            <person name="Waterman M.S."/>
            <person name="Eichler E.E."/>
            <person name="Adams M.D."/>
            <person name="Hunkapiller M.W."/>
            <person name="Myers E.W."/>
            <person name="Venter J.C."/>
        </authorList>
    </citation>
    <scope>NUCLEOTIDE SEQUENCE [LARGE SCALE GENOMIC DNA]</scope>
</reference>
<reference key="8">
    <citation type="journal article" date="2004" name="Genome Res.">
        <title>The status, quality, and expansion of the NIH full-length cDNA project: the Mammalian Gene Collection (MGC).</title>
        <authorList>
            <consortium name="The MGC Project Team"/>
        </authorList>
    </citation>
    <scope>NUCLEOTIDE SEQUENCE [LARGE SCALE MRNA] (ISOFORM 1)</scope>
    <scope>VARIANT ALA-454</scope>
    <source>
        <tissue>Brain</tissue>
    </source>
</reference>
<reference key="9">
    <citation type="journal article" date="1990" name="J. Neurochem.">
        <title>N-cadherin gene maps to human chromosome 18 and is not linked to the E-cadherin gene.</title>
        <authorList>
            <person name="Walsh F.S."/>
            <person name="Barton C.H."/>
            <person name="Putt W."/>
            <person name="Moore S.E."/>
            <person name="Kelsell D."/>
            <person name="Spurr N."/>
            <person name="Goodfellow P.N."/>
        </authorList>
    </citation>
    <scope>NUCLEOTIDE SEQUENCE [MRNA] OF 160-906 (ISOFORM 1)</scope>
    <scope>VARIANT LEU-212</scope>
</reference>
<reference key="10">
    <citation type="journal article" date="1994" name="Genomics">
        <title>Structure of the human N-cadherin gene: YAC analysis and fine chromosomal mapping to 18q11.2.</title>
        <authorList>
            <person name="Wallis J.A."/>
            <person name="Fox M."/>
            <person name="Walsh F.S."/>
        </authorList>
    </citation>
    <scope>NUCLEOTIDE SEQUENCE [GENOMIC DNA] OF 1-20</scope>
</reference>
<reference key="11">
    <citation type="journal article" date="2005" name="Oncogene">
        <title>Adhesion signaling by a novel mitotic substrate of src kinases.</title>
        <authorList>
            <person name="Bhatt A.S."/>
            <person name="Erdjument-Bromage H."/>
            <person name="Tempst P."/>
            <person name="Craik C.S."/>
            <person name="Moasser M.M."/>
        </authorList>
    </citation>
    <scope>INTERACTION WITH CDCP1</scope>
</reference>
<reference key="12">
    <citation type="journal article" date="2009" name="J. Proteome Res.">
        <title>Glycoproteomics analysis of human liver tissue by combination of multiple enzyme digestion and hydrazide chemistry.</title>
        <authorList>
            <person name="Chen R."/>
            <person name="Jiang X."/>
            <person name="Sun D."/>
            <person name="Han G."/>
            <person name="Wang F."/>
            <person name="Ye M."/>
            <person name="Wang L."/>
            <person name="Zou H."/>
        </authorList>
    </citation>
    <scope>GLYCOSYLATION [LARGE SCALE ANALYSIS] AT ASN-273; ASN-402; ASN-572 AND ASN-692</scope>
    <source>
        <tissue>Liver</tissue>
    </source>
</reference>
<reference key="13">
    <citation type="journal article" date="2013" name="Circ. Cardiovasc. Genet.">
        <title>Homozygous founder mutation in desmocollin-2 (DSC2) causes arrhythmogenic cardiomyopathy in the Hutterite population.</title>
        <authorList>
            <person name="Gerull B."/>
            <person name="Kirchner F."/>
            <person name="Chong J.X."/>
            <person name="Tagoe J."/>
            <person name="Chandrasekharan K."/>
            <person name="Strohm O."/>
            <person name="Waggoner D."/>
            <person name="Ober C."/>
            <person name="Duff H.J."/>
        </authorList>
    </citation>
    <scope>SUBCELLULAR LOCATION</scope>
</reference>
<reference key="14">
    <citation type="journal article" date="2015" name="Cell">
        <title>A single kinase generates the majority of the secreted phosphoproteome.</title>
        <authorList>
            <person name="Tagliabracci V.S."/>
            <person name="Wiley S.E."/>
            <person name="Guo X."/>
            <person name="Kinch L.N."/>
            <person name="Durrant E."/>
            <person name="Wen J."/>
            <person name="Xiao J."/>
            <person name="Cui J."/>
            <person name="Nguyen K.B."/>
            <person name="Engel J.L."/>
            <person name="Coon J.J."/>
            <person name="Grishin N."/>
            <person name="Pinna L.A."/>
            <person name="Pagliarini D.J."/>
            <person name="Dixon J.E."/>
        </authorList>
    </citation>
    <scope>PHOSPHORYLATION AT SER-96 AND SER-135</scope>
</reference>
<reference key="15">
    <citation type="journal article" date="2017" name="Sci. Rep.">
        <title>Loss of DLG5 promotes breast cancer malignancy by inhibiting the Hippo signaling pathway.</title>
        <authorList>
            <person name="Liu J."/>
            <person name="Li J."/>
            <person name="Li P."/>
            <person name="Wang Y."/>
            <person name="Liang Z."/>
            <person name="Jiang Y."/>
            <person name="Li J."/>
            <person name="Feng C."/>
            <person name="Wang R."/>
            <person name="Chen H."/>
            <person name="Zhou C."/>
            <person name="Zhang J."/>
            <person name="Yang J."/>
            <person name="Liu P."/>
        </authorList>
    </citation>
    <scope>SUBCELLULAR LOCATION</scope>
</reference>
<reference key="16">
    <citation type="journal article" date="2020" name="Mol. Cell. Biol.">
        <title>Fbxo45 Binds SPRY Motifs in the Extracellular Domain of N-Cadherin and Regulates Neuron Migration during Brain Development.</title>
        <authorList>
            <person name="Na Y."/>
            <person name="Calvo-Jimenez E."/>
            <person name="Kon E."/>
            <person name="Cao H."/>
            <person name="Jossin Y."/>
            <person name="Cooper J.A."/>
        </authorList>
    </citation>
    <scope>INTERACTION WITH FBXO45</scope>
</reference>
<reference key="17">
    <citation type="journal article" date="2017" name="Circ. Cardiovasc. Genet.">
        <title>Identification of cadherin 2 (CDH2) mutations in arrhythmogenic right ventricular cardiomyopathy.</title>
        <authorList>
            <person name="Mayosi B.M."/>
            <person name="Fish M."/>
            <person name="Shaboodien G."/>
            <person name="Mastantuono E."/>
            <person name="Kraus S."/>
            <person name="Wieland T."/>
            <person name="Kotta M.C."/>
            <person name="Chin A."/>
            <person name="Laing N."/>
            <person name="Ntusi N.B."/>
            <person name="Chong M."/>
            <person name="Horsfall C."/>
            <person name="Pimstone S.N."/>
            <person name="Gentilini D."/>
            <person name="Parati G."/>
            <person name="Strom T.M."/>
            <person name="Meitinger T."/>
            <person name="Pare G."/>
            <person name="Schwartz P.J."/>
            <person name="Crotti L."/>
        </authorList>
    </citation>
    <scope>INVOLVEMENT IN ARVD14</scope>
    <scope>VARIANTS ARVD14 PRO-229 AND ASN-407</scope>
</reference>
<reference key="18">
    <citation type="journal article" date="2017" name="Congenit. Heart Dis.">
        <title>Whole exome sequencing with genomic triangulation implicates CDH2-encoded N-cadherin as a novel pathogenic substrate for arrhythmogenic cardiomyopathy.</title>
        <authorList>
            <person name="Turkowski K.L."/>
            <person name="Tester D.J."/>
            <person name="Bos J.M."/>
            <person name="Haugaa K.H."/>
            <person name="Ackerman M.J."/>
        </authorList>
    </citation>
    <scope>INVOLVEMENT IN ARVD14</scope>
    <scope>VARIANT ARVD14 ASN-407</scope>
</reference>
<reference key="19">
    <citation type="journal article" date="2019" name="Am. J. Hum. Genet.">
        <title>De novo pathogenic variants in N-cadherin cause a syndromic neurodevelopmental disorder with corpus collosum, axon, cardiac, ocular, and genital defects.</title>
        <authorList>
            <consortium name="Undiagnosed Diseases Network"/>
            <person name="Accogli A."/>
            <person name="Calabretta S."/>
            <person name="St-Onge J."/>
            <person name="Boudrahem-Addour N."/>
            <person name="Dionne-Laporte A."/>
            <person name="Joset P."/>
            <person name="Azzarello-Burri S."/>
            <person name="Rauch A."/>
            <person name="Krier J."/>
            <person name="Fieg E."/>
            <person name="Pallais J.C."/>
            <person name="McConkie-Rosell A."/>
            <person name="McDonald M."/>
            <person name="Freedman S.F."/>
            <person name="Riviere J.B."/>
            <person name="Lafond-Lapalme J."/>
            <person name="Simpson B.N."/>
            <person name="Hopkin R.J."/>
            <person name="Trimouille A."/>
            <person name="Van-Gils J."/>
            <person name="Begtrup A."/>
            <person name="McWalter K."/>
            <person name="Delphine H."/>
            <person name="Keren B."/>
            <person name="Genevieve D."/>
            <person name="Argilli E."/>
            <person name="Sherr E.H."/>
            <person name="Severino M."/>
            <person name="Rouleau G.A."/>
            <person name="Yam P.T."/>
            <person name="Charron F."/>
            <person name="Srour M."/>
        </authorList>
    </citation>
    <scope>INVOLVEMENT IN ACOGS</scope>
    <scope>FUNCTION</scope>
    <scope>VARIANTS ACOGS ASN-353; ASN-597; TYR-597; THR-601; TRP-613; GLY-627 AND CYS-676</scope>
    <scope>CHARACTERIZATION OF VARIANTS ACOGS ASN-353; ASN-597; THR-601; TRP-613; GLY-627 AND CYS-676</scope>
</reference>
<reference key="20">
    <citation type="journal article" date="2020" name="Clin. Genet.">
        <title>Novel variants in CDH2 are associated with a new syndrome including Peters anomaly.</title>
        <authorList>
            <person name="Reis L.M."/>
            <person name="Houssin N.S."/>
            <person name="Zamora C."/>
            <person name="Abdul-Rahman O."/>
            <person name="Kalish J.M."/>
            <person name="Zackai E.H."/>
            <person name="Plageman T.F. Jr."/>
            <person name="Semina E.V."/>
        </authorList>
    </citation>
    <scope>INVOLVEMENT IN ACOGS</scope>
    <scope>VARIANTS ACOGS ASP-162; GLY-525 AND SER-603</scope>
</reference>
<reference key="21">
    <citation type="journal article" date="2021" name="Nat. Commun.">
        <title>CDH2 mutation affecting N-cadherin function causes attention-deficit hyperactivity disorder in humans and mice.</title>
        <authorList>
            <person name="Halperin D."/>
            <person name="Stavsky A."/>
            <person name="Kadir R."/>
            <person name="Drabkin M."/>
            <person name="Wormser O."/>
            <person name="Yogev Y."/>
            <person name="Dolgin V."/>
            <person name="Proskorovski-Ohayon R."/>
            <person name="Perez Y."/>
            <person name="Nudelman H."/>
            <person name="Stoler O."/>
            <person name="Rotblat B."/>
            <person name="Lifschytz T."/>
            <person name="Lotan A."/>
            <person name="Meiri G."/>
            <person name="Gitler D."/>
            <person name="Birk O.S."/>
        </authorList>
    </citation>
    <scope>VARIANT ADHD8 TYR-150</scope>
    <scope>CHARACTERIZATION OF VARIANT ADHD8 TYR-150</scope>
    <scope>INVOLVEMENT IN ADHD8</scope>
</reference>
<sequence>MCRIAGALRTLLPLLAALLQASVEASGEIALCKTGFPEDVYSAVLSKDVHEGQPLLNVKFSNCNGKRKVQYESSEPADFKVDEDGMVYAVRSFPLSSEHAKFLIYAQDKETQEKWQVAVKLSLKPTLTEESVKESAEVEEIVFPRQFSKHSGHLQRQKRDWVIPPINLPENSRGPFPQELVRIRSDRDKNLSLRYSVTGPGADQPPTGIFIINPISGQLSVTKPLDREQIARFHLRAHAVDINGNQVENPIDIVINVIDMNDNRPEFLHQVWNGTVPEGSKPGTYVMTVTAIDADDPNALNGMLRYRIVSQAPSTPSPNMFTINNETGDIITVAAGLDREKVQQYTLIIQATDMEGNPTYGLSNTATAVITVTDVNDNPPEFTAMTFYGEVPENRVDIIVANLTVTDKDQPHTPAWNAVYRISGGDPTGRFAIQTDPNSNDGLVTVVKPIDFETNRMFVLTVAAENQVPLAKGIQHPPQSTATVSVTVIDVNENPYFAPNPKIIRQEEGLHAGTMLTTFTAQDPDRYMQQNIRYTKLSDPANWLKIDPVNGQITTIAVLDRESPNVKNNIYNATFLASDNGIPPMSGTGTLQIYLLDINDNAPQVLPQEAETCETPDPNSINITALDYDIDPNAGPFAFDLPLSPVTIKRNWTITRLNGDFAQLNLKIKFLEAGIYEVPIIITDSGNPPKSNISILRVKVCQCDSNGDCTDVDRIVGAGLGTGAIIAILLCIIILLILVLMFVVWMKRRDKERQAKQLLIDPEDDVRDNILKYDEEGGGEEDQDYDLSQLQQPDTVEPDAIKPVGIRRMDERPIHAEPQYPVRSAAPHPGDIGDFINEGLKAADNDPTAPPYDSLLVFDYEGSGSTAGSLSSLNSSSSGGEQDYDYLNDWGPRFKKLADMYGGGDD</sequence>
<evidence type="ECO:0000250" key="1">
    <source>
        <dbReference type="UniProtKB" id="P10288"/>
    </source>
</evidence>
<evidence type="ECO:0000250" key="2">
    <source>
        <dbReference type="UniProtKB" id="P15116"/>
    </source>
</evidence>
<evidence type="ECO:0000250" key="3">
    <source>
        <dbReference type="UniProtKB" id="Q9Z1Y3"/>
    </source>
</evidence>
<evidence type="ECO:0000255" key="4"/>
<evidence type="ECO:0000255" key="5">
    <source>
        <dbReference type="PROSITE-ProRule" id="PRU00043"/>
    </source>
</evidence>
<evidence type="ECO:0000256" key="6">
    <source>
        <dbReference type="SAM" id="MobiDB-lite"/>
    </source>
</evidence>
<evidence type="ECO:0000269" key="7">
    <source>
    </source>
</evidence>
<evidence type="ECO:0000269" key="8">
    <source>
    </source>
</evidence>
<evidence type="ECO:0000269" key="9">
    <source>
    </source>
</evidence>
<evidence type="ECO:0000269" key="10">
    <source>
    </source>
</evidence>
<evidence type="ECO:0000269" key="11">
    <source>
    </source>
</evidence>
<evidence type="ECO:0000269" key="12">
    <source>
    </source>
</evidence>
<evidence type="ECO:0000269" key="13">
    <source>
    </source>
</evidence>
<evidence type="ECO:0000269" key="14">
    <source>
    </source>
</evidence>
<evidence type="ECO:0000269" key="15">
    <source>
    </source>
</evidence>
<evidence type="ECO:0000269" key="16">
    <source>
    </source>
</evidence>
<evidence type="ECO:0000269" key="17">
    <source>
    </source>
</evidence>
<evidence type="ECO:0000269" key="18">
    <source>
    </source>
</evidence>
<evidence type="ECO:0000269" key="19">
    <source>
    </source>
</evidence>
<evidence type="ECO:0000269" key="20">
    <source>
    </source>
</evidence>
<evidence type="ECO:0000303" key="21">
    <source>
    </source>
</evidence>
<evidence type="ECO:0000303" key="22">
    <source>
    </source>
</evidence>
<evidence type="ECO:0000305" key="23"/>
<feature type="signal peptide" evidence="4">
    <location>
        <begin position="1"/>
        <end position="25"/>
    </location>
</feature>
<feature type="propeptide" id="PRO_0000003731">
    <location>
        <begin position="26"/>
        <end position="159"/>
    </location>
</feature>
<feature type="chain" id="PRO_0000003732" description="Cadherin-2">
    <location>
        <begin position="160"/>
        <end position="906"/>
    </location>
</feature>
<feature type="topological domain" description="Extracellular" evidence="4">
    <location>
        <begin position="160"/>
        <end position="724"/>
    </location>
</feature>
<feature type="transmembrane region" description="Helical" evidence="4">
    <location>
        <begin position="725"/>
        <end position="745"/>
    </location>
</feature>
<feature type="topological domain" description="Cytoplasmic" evidence="4">
    <location>
        <begin position="746"/>
        <end position="906"/>
    </location>
</feature>
<feature type="domain" description="Cadherin 1" evidence="5">
    <location>
        <begin position="160"/>
        <end position="267"/>
    </location>
</feature>
<feature type="domain" description="Cadherin 2" evidence="5">
    <location>
        <begin position="268"/>
        <end position="382"/>
    </location>
</feature>
<feature type="domain" description="Cadherin 3" evidence="5">
    <location>
        <begin position="383"/>
        <end position="497"/>
    </location>
</feature>
<feature type="domain" description="Cadherin 4" evidence="5">
    <location>
        <begin position="498"/>
        <end position="603"/>
    </location>
</feature>
<feature type="domain" description="Cadherin 5" evidence="5">
    <location>
        <begin position="604"/>
        <end position="714"/>
    </location>
</feature>
<feature type="region of interest" description="Disordered" evidence="6">
    <location>
        <begin position="863"/>
        <end position="884"/>
    </location>
</feature>
<feature type="compositionally biased region" description="Low complexity" evidence="6">
    <location>
        <begin position="863"/>
        <end position="880"/>
    </location>
</feature>
<feature type="binding site" evidence="2">
    <location>
        <position position="170"/>
    </location>
    <ligand>
        <name>Ca(2+)</name>
        <dbReference type="ChEBI" id="CHEBI:29108"/>
        <label>1</label>
    </ligand>
</feature>
<feature type="binding site" evidence="2">
    <location>
        <position position="170"/>
    </location>
    <ligand>
        <name>Ca(2+)</name>
        <dbReference type="ChEBI" id="CHEBI:29108"/>
        <label>2</label>
    </ligand>
</feature>
<feature type="binding site" evidence="2">
    <location>
        <position position="226"/>
    </location>
    <ligand>
        <name>Ca(2+)</name>
        <dbReference type="ChEBI" id="CHEBI:29108"/>
        <label>1</label>
    </ligand>
</feature>
<feature type="binding site" evidence="2">
    <location>
        <position position="228"/>
    </location>
    <ligand>
        <name>Ca(2+)</name>
        <dbReference type="ChEBI" id="CHEBI:29108"/>
        <label>1</label>
    </ligand>
</feature>
<feature type="binding site" evidence="2">
    <location>
        <position position="228"/>
    </location>
    <ligand>
        <name>Ca(2+)</name>
        <dbReference type="ChEBI" id="CHEBI:29108"/>
        <label>2</label>
    </ligand>
</feature>
<feature type="binding site" evidence="2">
    <location>
        <position position="259"/>
    </location>
    <ligand>
        <name>Ca(2+)</name>
        <dbReference type="ChEBI" id="CHEBI:29108"/>
        <label>2</label>
    </ligand>
</feature>
<feature type="binding site" evidence="2">
    <location>
        <position position="260"/>
    </location>
    <ligand>
        <name>Ca(2+)</name>
        <dbReference type="ChEBI" id="CHEBI:29108"/>
        <label>2</label>
    </ligand>
</feature>
<feature type="binding site" evidence="2">
    <location>
        <position position="261"/>
    </location>
    <ligand>
        <name>Ca(2+)</name>
        <dbReference type="ChEBI" id="CHEBI:29108"/>
        <label>3</label>
    </ligand>
</feature>
<feature type="binding site" evidence="2">
    <location>
        <position position="262"/>
    </location>
    <ligand>
        <name>Ca(2+)</name>
        <dbReference type="ChEBI" id="CHEBI:29108"/>
        <label>1</label>
    </ligand>
</feature>
<feature type="binding site" evidence="2">
    <location>
        <position position="262"/>
    </location>
    <ligand>
        <name>Ca(2+)</name>
        <dbReference type="ChEBI" id="CHEBI:29108"/>
        <label>2</label>
    </ligand>
</feature>
<feature type="binding site" evidence="2">
    <location>
        <position position="263"/>
    </location>
    <ligand>
        <name>Ca(2+)</name>
        <dbReference type="ChEBI" id="CHEBI:29108"/>
        <label>3</label>
    </ligand>
</feature>
<feature type="binding site" evidence="2">
    <location>
        <position position="293"/>
    </location>
    <ligand>
        <name>Ca(2+)</name>
        <dbReference type="ChEBI" id="CHEBI:29108"/>
        <label>3</label>
    </ligand>
</feature>
<feature type="binding site" evidence="2">
    <location>
        <position position="295"/>
    </location>
    <ligand>
        <name>Ca(2+)</name>
        <dbReference type="ChEBI" id="CHEBI:29108"/>
        <label>2</label>
    </ligand>
</feature>
<feature type="binding site" evidence="2">
    <location>
        <position position="301"/>
    </location>
    <ligand>
        <name>Ca(2+)</name>
        <dbReference type="ChEBI" id="CHEBI:29108"/>
        <label>3</label>
    </ligand>
</feature>
<feature type="binding site" evidence="2">
    <location>
        <position position="353"/>
    </location>
    <ligand>
        <name>Ca(2+)</name>
        <dbReference type="ChEBI" id="CHEBI:29108"/>
        <label>3</label>
    </ligand>
</feature>
<feature type="modified residue" description="Phosphoserine; by FAM20C" evidence="13">
    <location>
        <position position="96"/>
    </location>
</feature>
<feature type="modified residue" description="Phosphoserine; by FAM20C" evidence="13">
    <location>
        <position position="135"/>
    </location>
</feature>
<feature type="glycosylation site" description="N-linked (GlcNAc...) asparagine" evidence="4">
    <location>
        <position position="190"/>
    </location>
</feature>
<feature type="glycosylation site" description="N-linked (GlcNAc...) asparagine" evidence="9">
    <location>
        <position position="273"/>
    </location>
</feature>
<feature type="glycosylation site" description="N-linked (GlcNAc...) asparagine" evidence="4">
    <location>
        <position position="325"/>
    </location>
</feature>
<feature type="glycosylation site" description="N-linked (GlcNAc...) asparagine" evidence="9">
    <location>
        <position position="402"/>
    </location>
</feature>
<feature type="glycosylation site" description="N-linked (GlcNAc...) asparagine" evidence="9">
    <location>
        <position position="572"/>
    </location>
</feature>
<feature type="glycosylation site" description="N-linked (GlcNAc...) asparagine" evidence="4">
    <location>
        <position position="651"/>
    </location>
</feature>
<feature type="glycosylation site" description="N-linked (GlcNAc...) asparagine" evidence="9">
    <location>
        <position position="692"/>
    </location>
</feature>
<feature type="splice variant" id="VSP_056448" description="In isoform 2." evidence="21">
    <original>MCRIAGALRTLLPLLAALLQASVEASGEIALCKTGFPEDVYSAVLSKDVHEGQPLLN</original>
    <variation>MFLLRRYVCIFTEKLKNQAELYVFLS</variation>
    <location>
        <begin position="1"/>
        <end position="57"/>
    </location>
</feature>
<feature type="sequence variant" id="VAR_028254" description="In dbSNP:rs17495042.">
    <original>A</original>
    <variation>T</variation>
    <location>
        <position position="21"/>
    </location>
</feature>
<feature type="sequence variant" id="VAR_028255" description="In dbSNP:rs17445840.">
    <original>A</original>
    <variation>T</variation>
    <location>
        <position position="118"/>
    </location>
</feature>
<feature type="sequence variant" id="VAR_087507" description="In ADHD8; decreased propeptide cleavage." evidence="20">
    <original>H</original>
    <variation>Y</variation>
    <location>
        <position position="150"/>
    </location>
</feature>
<feature type="sequence variant" id="VAR_084438" description="In ACOGS; uncertain significance; dbSNP:rs2013111940." evidence="18">
    <original>V</original>
    <variation>D</variation>
    <location>
        <position position="162"/>
    </location>
</feature>
<feature type="sequence variant" id="VAR_028256" description="In dbSNP:rs1041970." evidence="10">
    <original>S</original>
    <variation>T</variation>
    <location>
        <position position="196"/>
    </location>
</feature>
<feature type="sequence variant" id="VAR_028257" description="In dbSNP:rs1041972." evidence="11">
    <original>I</original>
    <variation>L</variation>
    <location>
        <position position="212"/>
    </location>
</feature>
<feature type="sequence variant" id="VAR_084439" description="In ARVD14; uncertain significance; dbSNP:rs965753331." evidence="15">
    <original>Q</original>
    <variation>P</variation>
    <location>
        <position position="229"/>
    </location>
</feature>
<feature type="sequence variant" id="VAR_084440" description="In ACOGS; decreased function in cell-cell adhesion; dbSNP:rs1599017933." evidence="17">
    <original>D</original>
    <variation>N</variation>
    <location>
        <position position="353"/>
    </location>
</feature>
<feature type="sequence variant" id="VAR_084441" description="In ARVD14; uncertain significance; dbSNP:rs568089577." evidence="15 16">
    <original>D</original>
    <variation>N</variation>
    <location>
        <position position="407"/>
    </location>
</feature>
<feature type="sequence variant" id="VAR_048503" description="In dbSNP:rs17857112." evidence="7">
    <original>T</original>
    <variation>A</variation>
    <location>
        <position position="454"/>
    </location>
</feature>
<feature type="sequence variant" id="VAR_084442" description="In ACOGS; uncertain significance." evidence="18">
    <original>D</original>
    <variation>G</variation>
    <location>
        <position position="525"/>
    </location>
</feature>
<feature type="sequence variant" id="VAR_084443" description="In ACOGS; decreased function in cell-cell adhesion; dbSNP:rs1599011050." evidence="17">
    <original>D</original>
    <variation>N</variation>
    <location>
        <position position="597"/>
    </location>
</feature>
<feature type="sequence variant" id="VAR_084444" description="In ACOGS; dbSNP:rs1599011050." evidence="17">
    <original>D</original>
    <variation>Y</variation>
    <location>
        <position position="597"/>
    </location>
</feature>
<feature type="sequence variant" id="VAR_084445" description="In ACOGS; decreased function in cell-cell adhesion; dbSNP:rs201775968." evidence="17">
    <original>N</original>
    <variation>T</variation>
    <location>
        <position position="601"/>
    </location>
</feature>
<feature type="sequence variant" id="VAR_084446" description="In ACOGS; uncertain significance." evidence="18">
    <original>P</original>
    <variation>S</variation>
    <location>
        <position position="603"/>
    </location>
</feature>
<feature type="sequence variant" id="VAR_084447" description="In ACOGS; decreased function in cell-cell adhesion; dbSNP:rs754880999." evidence="17">
    <original>C</original>
    <variation>W</variation>
    <location>
        <position position="613"/>
    </location>
</feature>
<feature type="sequence variant" id="VAR_084448" description="In ACOGS; decreased function in cell-cell adhesion; dbSNP:rs1599010918." evidence="17">
    <original>D</original>
    <variation>G</variation>
    <location>
        <position position="627"/>
    </location>
</feature>
<feature type="sequence variant" id="VAR_084449" description="In ACOGS; decreased function in cell-cell adhesion; dbSNP:rs199984052." evidence="17">
    <original>Y</original>
    <variation>C</variation>
    <location>
        <position position="676"/>
    </location>
</feature>
<feature type="sequence variant" id="VAR_028258" description="In dbSNP:rs2289664.">
    <original>N</original>
    <variation>S</variation>
    <location>
        <position position="845"/>
    </location>
</feature>
<feature type="sequence conflict" description="In Ref. 3; AAB22854." evidence="23" ref="3">
    <location>
        <position position="12"/>
    </location>
</feature>
<feature type="sequence conflict" description="In Ref. 1; CAA38213." evidence="23" ref="1">
    <original>A</original>
    <variation>L</variation>
    <location>
        <position position="16"/>
    </location>
</feature>
<feature type="sequence conflict" description="In Ref. 8; AAH36470." evidence="23" ref="8">
    <original>P</original>
    <variation>S</variation>
    <location>
        <position position="164"/>
    </location>
</feature>
<feature type="sequence conflict" description="In Ref. 1; CAA38213." evidence="23" ref="1">
    <original>N</original>
    <variation>I</variation>
    <location>
        <position position="357"/>
    </location>
</feature>
<feature type="sequence conflict" description="In Ref. 8; AAH36470." evidence="23" ref="8">
    <original>P</original>
    <variation>Q</variation>
    <location>
        <position position="437"/>
    </location>
</feature>
<feature type="sequence conflict" description="In Ref. 8; AAH36470." evidence="23" ref="8">
    <original>V</original>
    <variation>M</variation>
    <location>
        <position position="484"/>
    </location>
</feature>
<feature type="sequence conflict" description="In Ref. 8; AAH36470." evidence="23" ref="8">
    <original>D</original>
    <variation>G</variation>
    <location>
        <position position="629"/>
    </location>
</feature>
<feature type="sequence conflict" description="In Ref. 3; AAB22854." evidence="23" ref="3">
    <original>A</original>
    <variation>L</variation>
    <location>
        <position position="867"/>
    </location>
</feature>
<organism>
    <name type="scientific">Homo sapiens</name>
    <name type="common">Human</name>
    <dbReference type="NCBI Taxonomy" id="9606"/>
    <lineage>
        <taxon>Eukaryota</taxon>
        <taxon>Metazoa</taxon>
        <taxon>Chordata</taxon>
        <taxon>Craniata</taxon>
        <taxon>Vertebrata</taxon>
        <taxon>Euteleostomi</taxon>
        <taxon>Mammalia</taxon>
        <taxon>Eutheria</taxon>
        <taxon>Euarchontoglires</taxon>
        <taxon>Primates</taxon>
        <taxon>Haplorrhini</taxon>
        <taxon>Catarrhini</taxon>
        <taxon>Hominidae</taxon>
        <taxon>Homo</taxon>
    </lineage>
</organism>
<keyword id="KW-0025">Alternative splicing</keyword>
<keyword id="KW-0106">Calcium</keyword>
<keyword id="KW-0122">Cardiomyopathy</keyword>
<keyword id="KW-0130">Cell adhesion</keyword>
<keyword id="KW-0965">Cell junction</keyword>
<keyword id="KW-1003">Cell membrane</keyword>
<keyword id="KW-0165">Cleavage on pair of basic residues</keyword>
<keyword id="KW-0225">Disease variant</keyword>
<keyword id="KW-0325">Glycoprotein</keyword>
<keyword id="KW-0991">Intellectual disability</keyword>
<keyword id="KW-0472">Membrane</keyword>
<keyword id="KW-0479">Metal-binding</keyword>
<keyword id="KW-0597">Phosphoprotein</keyword>
<keyword id="KW-1267">Proteomics identification</keyword>
<keyword id="KW-1185">Reference proteome</keyword>
<keyword id="KW-0677">Repeat</keyword>
<keyword id="KW-0732">Signal</keyword>
<keyword id="KW-0812">Transmembrane</keyword>
<keyword id="KW-1133">Transmembrane helix</keyword>
<accession>P19022</accession>
<accession>A8MWK3</accession>
<accession>B0YIY6</accession>
<accession>Q14923</accession>
<accession>Q8N173</accession>